<organism>
    <name type="scientific">Cellvibrio japonicus (strain Ueda107)</name>
    <name type="common">Pseudomonas fluorescens subsp. cellulosa</name>
    <dbReference type="NCBI Taxonomy" id="498211"/>
    <lineage>
        <taxon>Bacteria</taxon>
        <taxon>Pseudomonadati</taxon>
        <taxon>Pseudomonadota</taxon>
        <taxon>Gammaproteobacteria</taxon>
        <taxon>Cellvibrionales</taxon>
        <taxon>Cellvibrionaceae</taxon>
        <taxon>Cellvibrio</taxon>
    </lineage>
</organism>
<feature type="chain" id="PRO_0000383377" description="Ribosomal RNA small subunit methyltransferase J">
    <location>
        <begin position="1"/>
        <end position="266"/>
    </location>
</feature>
<feature type="binding site" evidence="1">
    <location>
        <begin position="109"/>
        <end position="110"/>
    </location>
    <ligand>
        <name>S-adenosyl-L-methionine</name>
        <dbReference type="ChEBI" id="CHEBI:59789"/>
    </ligand>
</feature>
<feature type="binding site" evidence="1">
    <location>
        <begin position="125"/>
        <end position="126"/>
    </location>
    <ligand>
        <name>S-adenosyl-L-methionine</name>
        <dbReference type="ChEBI" id="CHEBI:59789"/>
    </ligand>
</feature>
<feature type="binding site" evidence="1">
    <location>
        <position position="185"/>
    </location>
    <ligand>
        <name>S-adenosyl-L-methionine</name>
        <dbReference type="ChEBI" id="CHEBI:59789"/>
    </ligand>
</feature>
<evidence type="ECO:0000255" key="1">
    <source>
        <dbReference type="HAMAP-Rule" id="MF_01523"/>
    </source>
</evidence>
<protein>
    <recommendedName>
        <fullName evidence="1">Ribosomal RNA small subunit methyltransferase J</fullName>
        <ecNumber evidence="1">2.1.1.242</ecNumber>
    </recommendedName>
    <alternativeName>
        <fullName evidence="1">16S rRNA m2G1516 methyltransferase</fullName>
    </alternativeName>
    <alternativeName>
        <fullName evidence="1">rRNA (guanine-N(2)-)-methyltransferase</fullName>
    </alternativeName>
</protein>
<name>RSMJ_CELJU</name>
<sequence length="266" mass="29370">MLSIPLVCSSDFAPAAQVLAQEFNLPIRVGEVPETIGDCEFVLVLDETGLALQQTGRKAPGAVRAEFTEGAVDHRRKFGGGKGQMIAKAVGVKAGFSPRVLDATAGLGRDAFVLATLGCRLQMIERSPLVFALLRDGLARAHAFAHAQDRELLQVVERMELAAQDSKTYLQGLAPEQFPDVIYLDPMFPERQKSADVKKEMRAFHSIVGTDEDADVLLPLALEHVRFRVVVKRPRKAPFLNNQIPSYQLEGKSSRYDIYTRKKLPD</sequence>
<proteinExistence type="inferred from homology"/>
<reference key="1">
    <citation type="journal article" date="2008" name="J. Bacteriol.">
        <title>Insights into plant cell wall degradation from the genome sequence of the soil bacterium Cellvibrio japonicus.</title>
        <authorList>
            <person name="DeBoy R.T."/>
            <person name="Mongodin E.F."/>
            <person name="Fouts D.E."/>
            <person name="Tailford L.E."/>
            <person name="Khouri H."/>
            <person name="Emerson J.B."/>
            <person name="Mohamoud Y."/>
            <person name="Watkins K."/>
            <person name="Henrissat B."/>
            <person name="Gilbert H.J."/>
            <person name="Nelson K.E."/>
        </authorList>
    </citation>
    <scope>NUCLEOTIDE SEQUENCE [LARGE SCALE GENOMIC DNA]</scope>
    <source>
        <strain>Ueda107</strain>
    </source>
</reference>
<comment type="function">
    <text evidence="1">Specifically methylates the guanosine in position 1516 of 16S rRNA.</text>
</comment>
<comment type="catalytic activity">
    <reaction evidence="1">
        <text>guanosine(1516) in 16S rRNA + S-adenosyl-L-methionine = N(2)-methylguanosine(1516) in 16S rRNA + S-adenosyl-L-homocysteine + H(+)</text>
        <dbReference type="Rhea" id="RHEA:43220"/>
        <dbReference type="Rhea" id="RHEA-COMP:10412"/>
        <dbReference type="Rhea" id="RHEA-COMP:10413"/>
        <dbReference type="ChEBI" id="CHEBI:15378"/>
        <dbReference type="ChEBI" id="CHEBI:57856"/>
        <dbReference type="ChEBI" id="CHEBI:59789"/>
        <dbReference type="ChEBI" id="CHEBI:74269"/>
        <dbReference type="ChEBI" id="CHEBI:74481"/>
        <dbReference type="EC" id="2.1.1.242"/>
    </reaction>
</comment>
<comment type="subcellular location">
    <subcellularLocation>
        <location evidence="1">Cytoplasm</location>
    </subcellularLocation>
</comment>
<comment type="similarity">
    <text evidence="1">Belongs to the methyltransferase superfamily. RsmJ family.</text>
</comment>
<gene>
    <name evidence="1" type="primary">rsmJ</name>
    <name type="ordered locus">CJA_0983</name>
</gene>
<accession>B3PLF9</accession>
<keyword id="KW-0963">Cytoplasm</keyword>
<keyword id="KW-0489">Methyltransferase</keyword>
<keyword id="KW-1185">Reference proteome</keyword>
<keyword id="KW-0698">rRNA processing</keyword>
<keyword id="KW-0949">S-adenosyl-L-methionine</keyword>
<keyword id="KW-0808">Transferase</keyword>
<dbReference type="EC" id="2.1.1.242" evidence="1"/>
<dbReference type="EMBL" id="CP000934">
    <property type="protein sequence ID" value="ACE83691.1"/>
    <property type="molecule type" value="Genomic_DNA"/>
</dbReference>
<dbReference type="RefSeq" id="WP_012486631.1">
    <property type="nucleotide sequence ID" value="NC_010995.1"/>
</dbReference>
<dbReference type="SMR" id="B3PLF9"/>
<dbReference type="STRING" id="498211.CJA_0983"/>
<dbReference type="KEGG" id="cja:CJA_0983"/>
<dbReference type="eggNOG" id="COG0742">
    <property type="taxonomic scope" value="Bacteria"/>
</dbReference>
<dbReference type="HOGENOM" id="CLU_076324_0_1_6"/>
<dbReference type="OrthoDB" id="3191794at2"/>
<dbReference type="Proteomes" id="UP000001036">
    <property type="component" value="Chromosome"/>
</dbReference>
<dbReference type="GO" id="GO:0005737">
    <property type="term" value="C:cytoplasm"/>
    <property type="evidence" value="ECO:0007669"/>
    <property type="project" value="UniProtKB-SubCell"/>
</dbReference>
<dbReference type="GO" id="GO:0008990">
    <property type="term" value="F:rRNA (guanine-N2-)-methyltransferase activity"/>
    <property type="evidence" value="ECO:0007669"/>
    <property type="project" value="UniProtKB-UniRule"/>
</dbReference>
<dbReference type="Gene3D" id="3.40.50.150">
    <property type="entry name" value="Vaccinia Virus protein VP39"/>
    <property type="match status" value="1"/>
</dbReference>
<dbReference type="HAMAP" id="MF_01523">
    <property type="entry name" value="16SrRNA_methyltr_J"/>
    <property type="match status" value="1"/>
</dbReference>
<dbReference type="InterPro" id="IPR007536">
    <property type="entry name" value="16SrRNA_methylTrfase_J"/>
</dbReference>
<dbReference type="InterPro" id="IPR029063">
    <property type="entry name" value="SAM-dependent_MTases_sf"/>
</dbReference>
<dbReference type="PANTHER" id="PTHR36112">
    <property type="entry name" value="RIBOSOMAL RNA SMALL SUBUNIT METHYLTRANSFERASE J"/>
    <property type="match status" value="1"/>
</dbReference>
<dbReference type="PANTHER" id="PTHR36112:SF1">
    <property type="entry name" value="RIBOSOMAL RNA SMALL SUBUNIT METHYLTRANSFERASE J"/>
    <property type="match status" value="1"/>
</dbReference>
<dbReference type="Pfam" id="PF04445">
    <property type="entry name" value="SAM_MT"/>
    <property type="match status" value="1"/>
</dbReference>
<dbReference type="SUPFAM" id="SSF53335">
    <property type="entry name" value="S-adenosyl-L-methionine-dependent methyltransferases"/>
    <property type="match status" value="1"/>
</dbReference>